<accession>Q7VDG7</accession>
<protein>
    <recommendedName>
        <fullName evidence="1">Small ribosomal subunit protein uS4</fullName>
    </recommendedName>
    <alternativeName>
        <fullName evidence="3">30S ribosomal protein S4</fullName>
    </alternativeName>
</protein>
<comment type="function">
    <text evidence="1">One of the primary rRNA binding proteins, it binds directly to 16S rRNA where it nucleates assembly of the body of the 30S subunit.</text>
</comment>
<comment type="function">
    <text evidence="1">With S5 and S12 plays an important role in translational accuracy.</text>
</comment>
<comment type="subunit">
    <text evidence="1">Part of the 30S ribosomal subunit. Contacts protein S5. The interaction surface between S4 and S5 is involved in control of translational fidelity.</text>
</comment>
<comment type="similarity">
    <text evidence="1">Belongs to the universal ribosomal protein uS4 family.</text>
</comment>
<dbReference type="EMBL" id="AE017126">
    <property type="protein sequence ID" value="AAP99455.1"/>
    <property type="molecule type" value="Genomic_DNA"/>
</dbReference>
<dbReference type="RefSeq" id="NP_874803.1">
    <property type="nucleotide sequence ID" value="NC_005042.1"/>
</dbReference>
<dbReference type="RefSeq" id="WP_011124564.1">
    <property type="nucleotide sequence ID" value="NC_005042.1"/>
</dbReference>
<dbReference type="SMR" id="Q7VDG7"/>
<dbReference type="STRING" id="167539.Pro_0409"/>
<dbReference type="EnsemblBacteria" id="AAP99455">
    <property type="protein sequence ID" value="AAP99455"/>
    <property type="gene ID" value="Pro_0409"/>
</dbReference>
<dbReference type="KEGG" id="pma:Pro_0409"/>
<dbReference type="PATRIC" id="fig|167539.5.peg.418"/>
<dbReference type="eggNOG" id="COG0522">
    <property type="taxonomic scope" value="Bacteria"/>
</dbReference>
<dbReference type="HOGENOM" id="CLU_092403_0_5_3"/>
<dbReference type="OrthoDB" id="9803672at2"/>
<dbReference type="Proteomes" id="UP000001420">
    <property type="component" value="Chromosome"/>
</dbReference>
<dbReference type="GO" id="GO:0015935">
    <property type="term" value="C:small ribosomal subunit"/>
    <property type="evidence" value="ECO:0007669"/>
    <property type="project" value="InterPro"/>
</dbReference>
<dbReference type="GO" id="GO:0019843">
    <property type="term" value="F:rRNA binding"/>
    <property type="evidence" value="ECO:0007669"/>
    <property type="project" value="UniProtKB-UniRule"/>
</dbReference>
<dbReference type="GO" id="GO:0003735">
    <property type="term" value="F:structural constituent of ribosome"/>
    <property type="evidence" value="ECO:0007669"/>
    <property type="project" value="InterPro"/>
</dbReference>
<dbReference type="GO" id="GO:0042274">
    <property type="term" value="P:ribosomal small subunit biogenesis"/>
    <property type="evidence" value="ECO:0007669"/>
    <property type="project" value="TreeGrafter"/>
</dbReference>
<dbReference type="GO" id="GO:0006412">
    <property type="term" value="P:translation"/>
    <property type="evidence" value="ECO:0007669"/>
    <property type="project" value="UniProtKB-UniRule"/>
</dbReference>
<dbReference type="CDD" id="cd00165">
    <property type="entry name" value="S4"/>
    <property type="match status" value="1"/>
</dbReference>
<dbReference type="FunFam" id="3.10.290.10:FF:000001">
    <property type="entry name" value="30S ribosomal protein S4"/>
    <property type="match status" value="1"/>
</dbReference>
<dbReference type="FunFam" id="1.10.1050.10:FF:000002">
    <property type="entry name" value="30S ribosomal protein S4, chloroplastic"/>
    <property type="match status" value="1"/>
</dbReference>
<dbReference type="Gene3D" id="1.10.1050.10">
    <property type="entry name" value="Ribosomal Protein S4 Delta 41, Chain A, domain 1"/>
    <property type="match status" value="1"/>
</dbReference>
<dbReference type="Gene3D" id="3.10.290.10">
    <property type="entry name" value="RNA-binding S4 domain"/>
    <property type="match status" value="1"/>
</dbReference>
<dbReference type="HAMAP" id="MF_01306_B">
    <property type="entry name" value="Ribosomal_uS4_B"/>
    <property type="match status" value="1"/>
</dbReference>
<dbReference type="InterPro" id="IPR022801">
    <property type="entry name" value="Ribosomal_uS4"/>
</dbReference>
<dbReference type="InterPro" id="IPR005709">
    <property type="entry name" value="Ribosomal_uS4_bac-type"/>
</dbReference>
<dbReference type="InterPro" id="IPR018079">
    <property type="entry name" value="Ribosomal_uS4_CS"/>
</dbReference>
<dbReference type="InterPro" id="IPR001912">
    <property type="entry name" value="Ribosomal_uS4_N"/>
</dbReference>
<dbReference type="InterPro" id="IPR002942">
    <property type="entry name" value="S4_RNA-bd"/>
</dbReference>
<dbReference type="InterPro" id="IPR036986">
    <property type="entry name" value="S4_RNA-bd_sf"/>
</dbReference>
<dbReference type="NCBIfam" id="NF003717">
    <property type="entry name" value="PRK05327.1"/>
    <property type="match status" value="1"/>
</dbReference>
<dbReference type="NCBIfam" id="TIGR01017">
    <property type="entry name" value="rpsD_bact"/>
    <property type="match status" value="1"/>
</dbReference>
<dbReference type="PANTHER" id="PTHR11831">
    <property type="entry name" value="30S 40S RIBOSOMAL PROTEIN"/>
    <property type="match status" value="1"/>
</dbReference>
<dbReference type="PANTHER" id="PTHR11831:SF4">
    <property type="entry name" value="SMALL RIBOSOMAL SUBUNIT PROTEIN US4M"/>
    <property type="match status" value="1"/>
</dbReference>
<dbReference type="Pfam" id="PF00163">
    <property type="entry name" value="Ribosomal_S4"/>
    <property type="match status" value="1"/>
</dbReference>
<dbReference type="Pfam" id="PF01479">
    <property type="entry name" value="S4"/>
    <property type="match status" value="1"/>
</dbReference>
<dbReference type="SMART" id="SM01390">
    <property type="entry name" value="Ribosomal_S4"/>
    <property type="match status" value="1"/>
</dbReference>
<dbReference type="SMART" id="SM00363">
    <property type="entry name" value="S4"/>
    <property type="match status" value="1"/>
</dbReference>
<dbReference type="SUPFAM" id="SSF55174">
    <property type="entry name" value="Alpha-L RNA-binding motif"/>
    <property type="match status" value="1"/>
</dbReference>
<dbReference type="PROSITE" id="PS00632">
    <property type="entry name" value="RIBOSOMAL_S4"/>
    <property type="match status" value="1"/>
</dbReference>
<dbReference type="PROSITE" id="PS50889">
    <property type="entry name" value="S4"/>
    <property type="match status" value="1"/>
</dbReference>
<sequence>MSRYRGPRLRITRRLGDLPGLTRKAAKRSNPPGQHGNARRKRSEYAIRLEEKQKLRFNYGISERQLVRYVKKARAMEGSTGTNLLKLLEGRLDNVCFRLGFGPTIPGSRQLVNHGHVTVNGKTLDIASYQCKSGDTIAIRERKGSKKLAEGNLEFPGLANVPPHLELEKSKMTAKVTGKCDREWVAIEINELLVVEYYSRKV</sequence>
<gene>
    <name evidence="1" type="primary">rpsD</name>
    <name evidence="1" type="synonym">rps4</name>
    <name type="ordered locus">Pro_0409</name>
</gene>
<organism>
    <name type="scientific">Prochlorococcus marinus (strain SARG / CCMP1375 / SS120)</name>
    <dbReference type="NCBI Taxonomy" id="167539"/>
    <lineage>
        <taxon>Bacteria</taxon>
        <taxon>Bacillati</taxon>
        <taxon>Cyanobacteriota</taxon>
        <taxon>Cyanophyceae</taxon>
        <taxon>Synechococcales</taxon>
        <taxon>Prochlorococcaceae</taxon>
        <taxon>Prochlorococcus</taxon>
    </lineage>
</organism>
<feature type="chain" id="PRO_0000132435" description="Small ribosomal subunit protein uS4">
    <location>
        <begin position="1"/>
        <end position="202"/>
    </location>
</feature>
<feature type="domain" description="S4 RNA-binding" evidence="1">
    <location>
        <begin position="90"/>
        <end position="152"/>
    </location>
</feature>
<feature type="region of interest" description="Disordered" evidence="2">
    <location>
        <begin position="15"/>
        <end position="43"/>
    </location>
</feature>
<keyword id="KW-1185">Reference proteome</keyword>
<keyword id="KW-0687">Ribonucleoprotein</keyword>
<keyword id="KW-0689">Ribosomal protein</keyword>
<keyword id="KW-0694">RNA-binding</keyword>
<keyword id="KW-0699">rRNA-binding</keyword>
<name>RS4_PROMA</name>
<evidence type="ECO:0000255" key="1">
    <source>
        <dbReference type="HAMAP-Rule" id="MF_01306"/>
    </source>
</evidence>
<evidence type="ECO:0000256" key="2">
    <source>
        <dbReference type="SAM" id="MobiDB-lite"/>
    </source>
</evidence>
<evidence type="ECO:0000305" key="3"/>
<proteinExistence type="inferred from homology"/>
<reference key="1">
    <citation type="journal article" date="2003" name="Proc. Natl. Acad. Sci. U.S.A.">
        <title>Genome sequence of the cyanobacterium Prochlorococcus marinus SS120, a nearly minimal oxyphototrophic genome.</title>
        <authorList>
            <person name="Dufresne A."/>
            <person name="Salanoubat M."/>
            <person name="Partensky F."/>
            <person name="Artiguenave F."/>
            <person name="Axmann I.M."/>
            <person name="Barbe V."/>
            <person name="Duprat S."/>
            <person name="Galperin M.Y."/>
            <person name="Koonin E.V."/>
            <person name="Le Gall F."/>
            <person name="Makarova K.S."/>
            <person name="Ostrowski M."/>
            <person name="Oztas S."/>
            <person name="Robert C."/>
            <person name="Rogozin I.B."/>
            <person name="Scanlan D.J."/>
            <person name="Tandeau de Marsac N."/>
            <person name="Weissenbach J."/>
            <person name="Wincker P."/>
            <person name="Wolf Y.I."/>
            <person name="Hess W.R."/>
        </authorList>
    </citation>
    <scope>NUCLEOTIDE SEQUENCE [LARGE SCALE GENOMIC DNA]</scope>
    <source>
        <strain>SARG / CCMP1375 / SS120</strain>
    </source>
</reference>